<accession>A0A0D9SF12</accession>
<evidence type="ECO:0000255" key="1"/>
<evidence type="ECO:0000305" key="2"/>
<evidence type="ECO:0000312" key="3">
    <source>
        <dbReference type="HGNC" id="HGNC:27003"/>
    </source>
</evidence>
<feature type="chain" id="PRO_0000444575" description="Transmembrane protein CCDC163">
    <location>
        <begin position="1"/>
        <end position="145"/>
    </location>
</feature>
<feature type="transmembrane region" description="Helical" evidence="1">
    <location>
        <begin position="38"/>
        <end position="54"/>
    </location>
</feature>
<sequence length="145" mass="16203">MNTSLSWFEQLDVLLNATDGNVVRNKQWLYPLGVSTELIGLCICFFCSSGCIFLGSPPQNSTAVTPAVLWEESEIMQKELKLLQYQLSQHQELLLKQLAEGRQAQVGSWKIPRGAPFLTWSPASFSSMPRVLSKRTYSFGAPKCS</sequence>
<keyword id="KW-0472">Membrane</keyword>
<keyword id="KW-1185">Reference proteome</keyword>
<keyword id="KW-0812">Transmembrane</keyword>
<keyword id="KW-1133">Transmembrane helix</keyword>
<protein>
    <recommendedName>
        <fullName evidence="2">Transmembrane protein CCDC163</fullName>
    </recommendedName>
    <alternativeName>
        <fullName evidence="2">Coiled-coil domain-containing protein 163</fullName>
    </alternativeName>
    <alternativeName>
        <fullName evidence="3">coiled-coil domain containing 163 pseudogene</fullName>
    </alternativeName>
</protein>
<comment type="subcellular location">
    <subcellularLocation>
        <location evidence="1">Membrane</location>
        <topology evidence="1">Single-pass membrane protein</topology>
    </subcellularLocation>
</comment>
<dbReference type="EMBL" id="AL451136">
    <property type="status" value="NOT_ANNOTATED_CDS"/>
    <property type="molecule type" value="Genomic_DNA"/>
</dbReference>
<dbReference type="EMBL" id="BC101255">
    <property type="status" value="NOT_ANNOTATED_CDS"/>
    <property type="molecule type" value="mRNA"/>
</dbReference>
<dbReference type="RefSeq" id="NP_001096071.1">
    <property type="nucleotide sequence ID" value="NM_001102601.3"/>
</dbReference>
<dbReference type="SMR" id="A0A0D9SF12"/>
<dbReference type="FunCoup" id="A0A0D9SF12">
    <property type="interactions" value="1"/>
</dbReference>
<dbReference type="STRING" id="9606.ENSP00000487061"/>
<dbReference type="GlyGen" id="A0A0D9SF12">
    <property type="glycosylation" value="1 site"/>
</dbReference>
<dbReference type="PhosphoSitePlus" id="A0A0D9SF12"/>
<dbReference type="BioMuta" id="CCDC163"/>
<dbReference type="MassIVE" id="A0A0D9SF12"/>
<dbReference type="PeptideAtlas" id="A0A0D9SF12"/>
<dbReference type="Ensembl" id="ENST00000629482.3">
    <property type="protein sequence ID" value="ENSP00000486197.1"/>
    <property type="gene ID" value="ENSG00000280670.3"/>
</dbReference>
<dbReference type="GeneID" id="126661"/>
<dbReference type="MANE-Select" id="ENST00000629482.3">
    <property type="protein sequence ID" value="ENSP00000486197.1"/>
    <property type="RefSeq nucleotide sequence ID" value="NM_001102601.3"/>
    <property type="RefSeq protein sequence ID" value="NP_001096071.1"/>
</dbReference>
<dbReference type="AGR" id="HGNC:27003"/>
<dbReference type="GeneCards" id="CCDC163"/>
<dbReference type="HGNC" id="HGNC:27003">
    <property type="gene designation" value="CCDC163"/>
</dbReference>
<dbReference type="HPA" id="ENSG00000280670">
    <property type="expression patterns" value="Low tissue specificity"/>
</dbReference>
<dbReference type="neXtProt" id="NX_A0A0D9SF12"/>
<dbReference type="OpenTargets" id="ENSG00000280670"/>
<dbReference type="VEuPathDB" id="HostDB:ENSG00000280670"/>
<dbReference type="GeneTree" id="ENSGT00940000165040"/>
<dbReference type="InParanoid" id="A0A0D9SF12"/>
<dbReference type="OMA" id="PFLYWSP"/>
<dbReference type="OrthoDB" id="9904351at2759"/>
<dbReference type="PAN-GO" id="A0A0D9SF12">
    <property type="GO annotations" value="0 GO annotations based on evolutionary models"/>
</dbReference>
<dbReference type="ChiTaRS" id="CCDC163">
    <property type="organism name" value="human"/>
</dbReference>
<dbReference type="Pharos" id="A0A0D9SF12">
    <property type="development level" value="Tdark"/>
</dbReference>
<dbReference type="PRO" id="PR:A0A0D9SF12"/>
<dbReference type="Proteomes" id="UP000005640">
    <property type="component" value="Chromosome 1"/>
</dbReference>
<dbReference type="RNAct" id="A0A0D9SF12">
    <property type="molecule type" value="protein"/>
</dbReference>
<dbReference type="Bgee" id="ENSG00000280670">
    <property type="expression patterns" value="Expressed in oocyte and 104 other cell types or tissues"/>
</dbReference>
<dbReference type="ExpressionAtlas" id="A0A0D9SF12">
    <property type="expression patterns" value="baseline and differential"/>
</dbReference>
<dbReference type="GO" id="GO:0016020">
    <property type="term" value="C:membrane"/>
    <property type="evidence" value="ECO:0007669"/>
    <property type="project" value="UniProtKB-SubCell"/>
</dbReference>
<dbReference type="InterPro" id="IPR039284">
    <property type="entry name" value="CCDC159/163"/>
</dbReference>
<dbReference type="PANTHER" id="PTHR34533:SF2">
    <property type="entry name" value="COILED-COIL DOMAIN CONTAINING 163"/>
    <property type="match status" value="1"/>
</dbReference>
<dbReference type="PANTHER" id="PTHR34533">
    <property type="entry name" value="TRANSMEMBRANE PROTEIN CCDC163"/>
    <property type="match status" value="1"/>
</dbReference>
<organism>
    <name type="scientific">Homo sapiens</name>
    <name type="common">Human</name>
    <dbReference type="NCBI Taxonomy" id="9606"/>
    <lineage>
        <taxon>Eukaryota</taxon>
        <taxon>Metazoa</taxon>
        <taxon>Chordata</taxon>
        <taxon>Craniata</taxon>
        <taxon>Vertebrata</taxon>
        <taxon>Euteleostomi</taxon>
        <taxon>Mammalia</taxon>
        <taxon>Eutheria</taxon>
        <taxon>Euarchontoglires</taxon>
        <taxon>Primates</taxon>
        <taxon>Haplorrhini</taxon>
        <taxon>Catarrhini</taxon>
        <taxon>Hominidae</taxon>
        <taxon>Homo</taxon>
    </lineage>
</organism>
<reference key="1">
    <citation type="journal article" date="2006" name="Nature">
        <title>The DNA sequence and biological annotation of human chromosome 1.</title>
        <authorList>
            <person name="Gregory S.G."/>
            <person name="Barlow K.F."/>
            <person name="McLay K.E."/>
            <person name="Kaul R."/>
            <person name="Swarbreck D."/>
            <person name="Dunham A."/>
            <person name="Scott C.E."/>
            <person name="Howe K.L."/>
            <person name="Woodfine K."/>
            <person name="Spencer C.C.A."/>
            <person name="Jones M.C."/>
            <person name="Gillson C."/>
            <person name="Searle S."/>
            <person name="Zhou Y."/>
            <person name="Kokocinski F."/>
            <person name="McDonald L."/>
            <person name="Evans R."/>
            <person name="Phillips K."/>
            <person name="Atkinson A."/>
            <person name="Cooper R."/>
            <person name="Jones C."/>
            <person name="Hall R.E."/>
            <person name="Andrews T.D."/>
            <person name="Lloyd C."/>
            <person name="Ainscough R."/>
            <person name="Almeida J.P."/>
            <person name="Ambrose K.D."/>
            <person name="Anderson F."/>
            <person name="Andrew R.W."/>
            <person name="Ashwell R.I.S."/>
            <person name="Aubin K."/>
            <person name="Babbage A.K."/>
            <person name="Bagguley C.L."/>
            <person name="Bailey J."/>
            <person name="Beasley H."/>
            <person name="Bethel G."/>
            <person name="Bird C.P."/>
            <person name="Bray-Allen S."/>
            <person name="Brown J.Y."/>
            <person name="Brown A.J."/>
            <person name="Buckley D."/>
            <person name="Burton J."/>
            <person name="Bye J."/>
            <person name="Carder C."/>
            <person name="Chapman J.C."/>
            <person name="Clark S.Y."/>
            <person name="Clarke G."/>
            <person name="Clee C."/>
            <person name="Cobley V."/>
            <person name="Collier R.E."/>
            <person name="Corby N."/>
            <person name="Coville G.J."/>
            <person name="Davies J."/>
            <person name="Deadman R."/>
            <person name="Dunn M."/>
            <person name="Earthrowl M."/>
            <person name="Ellington A.G."/>
            <person name="Errington H."/>
            <person name="Frankish A."/>
            <person name="Frankland J."/>
            <person name="French L."/>
            <person name="Garner P."/>
            <person name="Garnett J."/>
            <person name="Gay L."/>
            <person name="Ghori M.R.J."/>
            <person name="Gibson R."/>
            <person name="Gilby L.M."/>
            <person name="Gillett W."/>
            <person name="Glithero R.J."/>
            <person name="Grafham D.V."/>
            <person name="Griffiths C."/>
            <person name="Griffiths-Jones S."/>
            <person name="Grocock R."/>
            <person name="Hammond S."/>
            <person name="Harrison E.S.I."/>
            <person name="Hart E."/>
            <person name="Haugen E."/>
            <person name="Heath P.D."/>
            <person name="Holmes S."/>
            <person name="Holt K."/>
            <person name="Howden P.J."/>
            <person name="Hunt A.R."/>
            <person name="Hunt S.E."/>
            <person name="Hunter G."/>
            <person name="Isherwood J."/>
            <person name="James R."/>
            <person name="Johnson C."/>
            <person name="Johnson D."/>
            <person name="Joy A."/>
            <person name="Kay M."/>
            <person name="Kershaw J.K."/>
            <person name="Kibukawa M."/>
            <person name="Kimberley A.M."/>
            <person name="King A."/>
            <person name="Knights A.J."/>
            <person name="Lad H."/>
            <person name="Laird G."/>
            <person name="Lawlor S."/>
            <person name="Leongamornlert D.A."/>
            <person name="Lloyd D.M."/>
            <person name="Loveland J."/>
            <person name="Lovell J."/>
            <person name="Lush M.J."/>
            <person name="Lyne R."/>
            <person name="Martin S."/>
            <person name="Mashreghi-Mohammadi M."/>
            <person name="Matthews L."/>
            <person name="Matthews N.S.W."/>
            <person name="McLaren S."/>
            <person name="Milne S."/>
            <person name="Mistry S."/>
            <person name="Moore M.J.F."/>
            <person name="Nickerson T."/>
            <person name="O'Dell C.N."/>
            <person name="Oliver K."/>
            <person name="Palmeiri A."/>
            <person name="Palmer S.A."/>
            <person name="Parker A."/>
            <person name="Patel D."/>
            <person name="Pearce A.V."/>
            <person name="Peck A.I."/>
            <person name="Pelan S."/>
            <person name="Phelps K."/>
            <person name="Phillimore B.J."/>
            <person name="Plumb R."/>
            <person name="Rajan J."/>
            <person name="Raymond C."/>
            <person name="Rouse G."/>
            <person name="Saenphimmachak C."/>
            <person name="Sehra H.K."/>
            <person name="Sheridan E."/>
            <person name="Shownkeen R."/>
            <person name="Sims S."/>
            <person name="Skuce C.D."/>
            <person name="Smith M."/>
            <person name="Steward C."/>
            <person name="Subramanian S."/>
            <person name="Sycamore N."/>
            <person name="Tracey A."/>
            <person name="Tromans A."/>
            <person name="Van Helmond Z."/>
            <person name="Wall M."/>
            <person name="Wallis J.M."/>
            <person name="White S."/>
            <person name="Whitehead S.L."/>
            <person name="Wilkinson J.E."/>
            <person name="Willey D.L."/>
            <person name="Williams H."/>
            <person name="Wilming L."/>
            <person name="Wray P.W."/>
            <person name="Wu Z."/>
            <person name="Coulson A."/>
            <person name="Vaudin M."/>
            <person name="Sulston J.E."/>
            <person name="Durbin R.M."/>
            <person name="Hubbard T."/>
            <person name="Wooster R."/>
            <person name="Dunham I."/>
            <person name="Carter N.P."/>
            <person name="McVean G."/>
            <person name="Ross M.T."/>
            <person name="Harrow J."/>
            <person name="Olson M.V."/>
            <person name="Beck S."/>
            <person name="Rogers J."/>
            <person name="Bentley D.R."/>
        </authorList>
    </citation>
    <scope>NUCLEOTIDE SEQUENCE [LARGE SCALE GENOMIC DNA]</scope>
</reference>
<reference key="2">
    <citation type="journal article" date="2004" name="Genome Res.">
        <title>The status, quality, and expansion of the NIH full-length cDNA project: the Mammalian Gene Collection (MGC).</title>
        <authorList>
            <consortium name="The MGC Project Team"/>
        </authorList>
    </citation>
    <scope>NUCLEOTIDE SEQUENCE [LARGE SCALE MRNA]</scope>
</reference>
<name>CC163_HUMAN</name>
<gene>
    <name evidence="3" type="primary">CCDC163</name>
    <name evidence="3" type="synonym">C1orf231</name>
    <name evidence="3" type="synonym">CCDC163P</name>
</gene>
<proteinExistence type="evidence at transcript level"/>